<dbReference type="EMBL" id="AE007317">
    <property type="protein sequence ID" value="AAL00821.1"/>
    <property type="molecule type" value="Genomic_DNA"/>
</dbReference>
<dbReference type="PIR" id="H98123">
    <property type="entry name" value="H98123"/>
</dbReference>
<dbReference type="RefSeq" id="NP_359610.1">
    <property type="nucleotide sequence ID" value="NC_003098.1"/>
</dbReference>
<dbReference type="RefSeq" id="WP_000808063.1">
    <property type="nucleotide sequence ID" value="NC_003098.1"/>
</dbReference>
<dbReference type="SMR" id="P0A3B8"/>
<dbReference type="STRING" id="171101.spr2019"/>
<dbReference type="GeneID" id="45652566"/>
<dbReference type="KEGG" id="spr:spr2019"/>
<dbReference type="PATRIC" id="fig|171101.6.peg.2185"/>
<dbReference type="eggNOG" id="COG0264">
    <property type="taxonomic scope" value="Bacteria"/>
</dbReference>
<dbReference type="HOGENOM" id="CLU_047155_0_1_9"/>
<dbReference type="Proteomes" id="UP000000586">
    <property type="component" value="Chromosome"/>
</dbReference>
<dbReference type="GO" id="GO:0005737">
    <property type="term" value="C:cytoplasm"/>
    <property type="evidence" value="ECO:0007669"/>
    <property type="project" value="UniProtKB-SubCell"/>
</dbReference>
<dbReference type="GO" id="GO:0003746">
    <property type="term" value="F:translation elongation factor activity"/>
    <property type="evidence" value="ECO:0000318"/>
    <property type="project" value="GO_Central"/>
</dbReference>
<dbReference type="GO" id="GO:0006414">
    <property type="term" value="P:translational elongation"/>
    <property type="evidence" value="ECO:0000318"/>
    <property type="project" value="GO_Central"/>
</dbReference>
<dbReference type="CDD" id="cd14275">
    <property type="entry name" value="UBA_EF-Ts"/>
    <property type="match status" value="1"/>
</dbReference>
<dbReference type="FunFam" id="1.10.286.20:FF:000004">
    <property type="entry name" value="Elongation factor Ts"/>
    <property type="match status" value="1"/>
</dbReference>
<dbReference type="FunFam" id="1.10.8.10:FF:000001">
    <property type="entry name" value="Elongation factor Ts"/>
    <property type="match status" value="1"/>
</dbReference>
<dbReference type="FunFam" id="3.30.479.20:FF:000009">
    <property type="entry name" value="Elongation factor Ts"/>
    <property type="match status" value="1"/>
</dbReference>
<dbReference type="FunFam" id="3.30.479.20:FF:000013">
    <property type="entry name" value="Elongation factor Ts"/>
    <property type="match status" value="1"/>
</dbReference>
<dbReference type="FunFam" id="3.30.479.20:FF:000016">
    <property type="entry name" value="Elongation factor Ts"/>
    <property type="match status" value="1"/>
</dbReference>
<dbReference type="Gene3D" id="1.10.286.20">
    <property type="match status" value="1"/>
</dbReference>
<dbReference type="Gene3D" id="1.10.8.10">
    <property type="entry name" value="DNA helicase RuvA subunit, C-terminal domain"/>
    <property type="match status" value="1"/>
</dbReference>
<dbReference type="Gene3D" id="3.30.479.20">
    <property type="entry name" value="Elongation factor Ts, dimerisation domain"/>
    <property type="match status" value="2"/>
</dbReference>
<dbReference type="HAMAP" id="MF_00050">
    <property type="entry name" value="EF_Ts"/>
    <property type="match status" value="1"/>
</dbReference>
<dbReference type="InterPro" id="IPR036402">
    <property type="entry name" value="EF-Ts_dimer_sf"/>
</dbReference>
<dbReference type="InterPro" id="IPR001816">
    <property type="entry name" value="Transl_elong_EFTs/EF1B"/>
</dbReference>
<dbReference type="InterPro" id="IPR014039">
    <property type="entry name" value="Transl_elong_EFTs/EF1B_dimer"/>
</dbReference>
<dbReference type="InterPro" id="IPR018101">
    <property type="entry name" value="Transl_elong_Ts_CS"/>
</dbReference>
<dbReference type="InterPro" id="IPR009060">
    <property type="entry name" value="UBA-like_sf"/>
</dbReference>
<dbReference type="NCBIfam" id="TIGR00116">
    <property type="entry name" value="tsf"/>
    <property type="match status" value="1"/>
</dbReference>
<dbReference type="PANTHER" id="PTHR11741">
    <property type="entry name" value="ELONGATION FACTOR TS"/>
    <property type="match status" value="1"/>
</dbReference>
<dbReference type="PANTHER" id="PTHR11741:SF0">
    <property type="entry name" value="ELONGATION FACTOR TS, MITOCHONDRIAL"/>
    <property type="match status" value="1"/>
</dbReference>
<dbReference type="Pfam" id="PF00889">
    <property type="entry name" value="EF_TS"/>
    <property type="match status" value="1"/>
</dbReference>
<dbReference type="SUPFAM" id="SSF54713">
    <property type="entry name" value="Elongation factor Ts (EF-Ts), dimerisation domain"/>
    <property type="match status" value="2"/>
</dbReference>
<dbReference type="SUPFAM" id="SSF46934">
    <property type="entry name" value="UBA-like"/>
    <property type="match status" value="1"/>
</dbReference>
<dbReference type="PROSITE" id="PS01126">
    <property type="entry name" value="EF_TS_1"/>
    <property type="match status" value="1"/>
</dbReference>
<dbReference type="PROSITE" id="PS01127">
    <property type="entry name" value="EF_TS_2"/>
    <property type="match status" value="1"/>
</dbReference>
<reference key="1">
    <citation type="journal article" date="2001" name="J. Bacteriol.">
        <title>Genome of the bacterium Streptococcus pneumoniae strain R6.</title>
        <authorList>
            <person name="Hoskins J."/>
            <person name="Alborn W.E. Jr."/>
            <person name="Arnold J."/>
            <person name="Blaszczak L.C."/>
            <person name="Burgett S."/>
            <person name="DeHoff B.S."/>
            <person name="Estrem S.T."/>
            <person name="Fritz L."/>
            <person name="Fu D.-J."/>
            <person name="Fuller W."/>
            <person name="Geringer C."/>
            <person name="Gilmour R."/>
            <person name="Glass J.S."/>
            <person name="Khoja H."/>
            <person name="Kraft A.R."/>
            <person name="Lagace R.E."/>
            <person name="LeBlanc D.J."/>
            <person name="Lee L.N."/>
            <person name="Lefkowitz E.J."/>
            <person name="Lu J."/>
            <person name="Matsushima P."/>
            <person name="McAhren S.M."/>
            <person name="McHenney M."/>
            <person name="McLeaster K."/>
            <person name="Mundy C.W."/>
            <person name="Nicas T.I."/>
            <person name="Norris F.H."/>
            <person name="O'Gara M."/>
            <person name="Peery R.B."/>
            <person name="Robertson G.T."/>
            <person name="Rockey P."/>
            <person name="Sun P.-M."/>
            <person name="Winkler M.E."/>
            <person name="Yang Y."/>
            <person name="Young-Bellido M."/>
            <person name="Zhao G."/>
            <person name="Zook C.A."/>
            <person name="Baltz R.H."/>
            <person name="Jaskunas S.R."/>
            <person name="Rosteck P.R. Jr."/>
            <person name="Skatrud P.L."/>
            <person name="Glass J.I."/>
        </authorList>
    </citation>
    <scope>NUCLEOTIDE SEQUENCE [LARGE SCALE GENOMIC DNA]</scope>
    <source>
        <strain>ATCC BAA-255 / R6</strain>
    </source>
</reference>
<evidence type="ECO:0000250" key="1"/>
<evidence type="ECO:0000305" key="2"/>
<protein>
    <recommendedName>
        <fullName>Elongation factor Ts</fullName>
        <shortName>EF-Ts</shortName>
    </recommendedName>
</protein>
<organism>
    <name type="scientific">Streptococcus pneumoniae (strain ATCC BAA-255 / R6)</name>
    <dbReference type="NCBI Taxonomy" id="171101"/>
    <lineage>
        <taxon>Bacteria</taxon>
        <taxon>Bacillati</taxon>
        <taxon>Bacillota</taxon>
        <taxon>Bacilli</taxon>
        <taxon>Lactobacillales</taxon>
        <taxon>Streptococcaceae</taxon>
        <taxon>Streptococcus</taxon>
    </lineage>
</organism>
<accession>P0A3B8</accession>
<accession>P80715</accession>
<comment type="function">
    <text evidence="1">Associates with the EF-Tu.GDP complex and induces the exchange of GDP to GTP. It remains bound to the aminoacyl-tRNA.EF-Tu.GTP complex up to the GTP hydrolysis stage on the ribosome (By similarity).</text>
</comment>
<comment type="subcellular location">
    <subcellularLocation>
        <location evidence="1">Cytoplasm</location>
    </subcellularLocation>
</comment>
<comment type="similarity">
    <text evidence="2">Belongs to the EF-Ts family.</text>
</comment>
<sequence length="346" mass="37362">MAEITAKLVKELREKSGAGVMDAKKALVETDGDIEKAIELLREKGMAKAAKKADRVAAEGLTGVYVNGNVAAVIEVNAETDFVAKNAQFVELVNTTAKVIAEGKPANNEEALALIMPSGETLEAAYVSATATIGEKISFRRFALIEKTDAQHFGAYQHNGGRIGVISVVEGGDEALAKQLSMHIAAMKPTVLSYKELDEQFVKDELAQLNHVIDQDNESRAMVNKPALPHLKYGSKAQLTDDVIAQAEADIKAELAAEGKPEKIWDKIIPGKMDRFMLDNTKVDQAYTLLAQVYIMDDSKTVEAYLESVNASVVEFARFEVGEGIEKAANDFEAEVAATMAAALNN</sequence>
<gene>
    <name type="primary">tsf</name>
    <name type="ordered locus">spr2019</name>
</gene>
<keyword id="KW-0963">Cytoplasm</keyword>
<keyword id="KW-0251">Elongation factor</keyword>
<keyword id="KW-0648">Protein biosynthesis</keyword>
<keyword id="KW-1185">Reference proteome</keyword>
<name>EFTS_STRR6</name>
<proteinExistence type="inferred from homology"/>
<feature type="initiator methionine" description="Removed" evidence="1">
    <location>
        <position position="1"/>
    </location>
</feature>
<feature type="chain" id="PRO_0000161209" description="Elongation factor Ts">
    <location>
        <begin position="2"/>
        <end position="346"/>
    </location>
</feature>
<feature type="region of interest" description="Involved in Mg(2+) ion dislocation from EF-Tu" evidence="1">
    <location>
        <begin position="80"/>
        <end position="83"/>
    </location>
</feature>